<name>RNC_ALKEH</name>
<sequence>MPTPKDALQDRLGYRFRRPELLDEALTHRSVTGPDNERLEFLGDGILNFVIADELYHRRPDATEGVLSRLRATLVNGRTLAEIGKGLDVGTALRLGGGEMKSGGQRRKSILADAVEALFGAIYLDGGFDPSRETILRLYRDRLASLPTEAELKDPKTRLQEHLQAGRRPLPRYEVLEVSGQSHDQTFRVACRLQDAAVTAEGEAGSRRKAEQQAAEQMLKRLEDKHER</sequence>
<feature type="chain" id="PRO_1000075718" description="Ribonuclease 3">
    <location>
        <begin position="1"/>
        <end position="228"/>
    </location>
</feature>
<feature type="domain" description="RNase III" evidence="1">
    <location>
        <begin position="5"/>
        <end position="127"/>
    </location>
</feature>
<feature type="domain" description="DRBM" evidence="1">
    <location>
        <begin position="154"/>
        <end position="224"/>
    </location>
</feature>
<feature type="region of interest" description="Disordered" evidence="2">
    <location>
        <begin position="200"/>
        <end position="228"/>
    </location>
</feature>
<feature type="compositionally biased region" description="Basic and acidic residues" evidence="2">
    <location>
        <begin position="218"/>
        <end position="228"/>
    </location>
</feature>
<feature type="active site" evidence="1">
    <location>
        <position position="44"/>
    </location>
</feature>
<feature type="active site" evidence="1">
    <location>
        <position position="116"/>
    </location>
</feature>
<feature type="binding site" evidence="1">
    <location>
        <position position="40"/>
    </location>
    <ligand>
        <name>Mg(2+)</name>
        <dbReference type="ChEBI" id="CHEBI:18420"/>
    </ligand>
</feature>
<feature type="binding site" evidence="1">
    <location>
        <position position="113"/>
    </location>
    <ligand>
        <name>Mg(2+)</name>
        <dbReference type="ChEBI" id="CHEBI:18420"/>
    </ligand>
</feature>
<feature type="binding site" evidence="1">
    <location>
        <position position="116"/>
    </location>
    <ligand>
        <name>Mg(2+)</name>
        <dbReference type="ChEBI" id="CHEBI:18420"/>
    </ligand>
</feature>
<accession>Q0A8Z1</accession>
<keyword id="KW-0963">Cytoplasm</keyword>
<keyword id="KW-0255">Endonuclease</keyword>
<keyword id="KW-0378">Hydrolase</keyword>
<keyword id="KW-0460">Magnesium</keyword>
<keyword id="KW-0479">Metal-binding</keyword>
<keyword id="KW-0507">mRNA processing</keyword>
<keyword id="KW-0540">Nuclease</keyword>
<keyword id="KW-1185">Reference proteome</keyword>
<keyword id="KW-0694">RNA-binding</keyword>
<keyword id="KW-0698">rRNA processing</keyword>
<keyword id="KW-0699">rRNA-binding</keyword>
<keyword id="KW-0819">tRNA processing</keyword>
<proteinExistence type="inferred from homology"/>
<comment type="function">
    <text evidence="1">Digests double-stranded RNA. Involved in the processing of primary rRNA transcript to yield the immediate precursors to the large and small rRNAs (23S and 16S). Processes some mRNAs, and tRNAs when they are encoded in the rRNA operon. Processes pre-crRNA and tracrRNA of type II CRISPR loci if present in the organism.</text>
</comment>
<comment type="catalytic activity">
    <reaction evidence="1">
        <text>Endonucleolytic cleavage to 5'-phosphomonoester.</text>
        <dbReference type="EC" id="3.1.26.3"/>
    </reaction>
</comment>
<comment type="cofactor">
    <cofactor evidence="1">
        <name>Mg(2+)</name>
        <dbReference type="ChEBI" id="CHEBI:18420"/>
    </cofactor>
</comment>
<comment type="subunit">
    <text evidence="1">Homodimer.</text>
</comment>
<comment type="subcellular location">
    <subcellularLocation>
        <location evidence="1">Cytoplasm</location>
    </subcellularLocation>
</comment>
<comment type="similarity">
    <text evidence="1">Belongs to the ribonuclease III family.</text>
</comment>
<gene>
    <name evidence="1" type="primary">rnc</name>
    <name type="ordered locus">Mlg_1347</name>
</gene>
<evidence type="ECO:0000255" key="1">
    <source>
        <dbReference type="HAMAP-Rule" id="MF_00104"/>
    </source>
</evidence>
<evidence type="ECO:0000256" key="2">
    <source>
        <dbReference type="SAM" id="MobiDB-lite"/>
    </source>
</evidence>
<reference key="1">
    <citation type="submission" date="2006-08" db="EMBL/GenBank/DDBJ databases">
        <title>Complete sequence of Alkalilimnicola ehrilichei MLHE-1.</title>
        <authorList>
            <person name="Copeland A."/>
            <person name="Lucas S."/>
            <person name="Lapidus A."/>
            <person name="Barry K."/>
            <person name="Detter J.C."/>
            <person name="Glavina del Rio T."/>
            <person name="Hammon N."/>
            <person name="Israni S."/>
            <person name="Dalin E."/>
            <person name="Tice H."/>
            <person name="Pitluck S."/>
            <person name="Sims D."/>
            <person name="Brettin T."/>
            <person name="Bruce D."/>
            <person name="Han C."/>
            <person name="Tapia R."/>
            <person name="Gilna P."/>
            <person name="Schmutz J."/>
            <person name="Larimer F."/>
            <person name="Land M."/>
            <person name="Hauser L."/>
            <person name="Kyrpides N."/>
            <person name="Mikhailova N."/>
            <person name="Oremland R.S."/>
            <person name="Hoeft S.E."/>
            <person name="Switzer-Blum J."/>
            <person name="Kulp T."/>
            <person name="King G."/>
            <person name="Tabita R."/>
            <person name="Witte B."/>
            <person name="Santini J.M."/>
            <person name="Basu P."/>
            <person name="Hollibaugh J.T."/>
            <person name="Xie G."/>
            <person name="Stolz J.F."/>
            <person name="Richardson P."/>
        </authorList>
    </citation>
    <scope>NUCLEOTIDE SEQUENCE [LARGE SCALE GENOMIC DNA]</scope>
    <source>
        <strain>ATCC BAA-1101 / DSM 17681 / MLHE-1</strain>
    </source>
</reference>
<organism>
    <name type="scientific">Alkalilimnicola ehrlichii (strain ATCC BAA-1101 / DSM 17681 / MLHE-1)</name>
    <dbReference type="NCBI Taxonomy" id="187272"/>
    <lineage>
        <taxon>Bacteria</taxon>
        <taxon>Pseudomonadati</taxon>
        <taxon>Pseudomonadota</taxon>
        <taxon>Gammaproteobacteria</taxon>
        <taxon>Chromatiales</taxon>
        <taxon>Ectothiorhodospiraceae</taxon>
        <taxon>Alkalilimnicola</taxon>
    </lineage>
</organism>
<dbReference type="EC" id="3.1.26.3" evidence="1"/>
<dbReference type="EMBL" id="CP000453">
    <property type="protein sequence ID" value="ABI56696.1"/>
    <property type="molecule type" value="Genomic_DNA"/>
</dbReference>
<dbReference type="RefSeq" id="WP_011629091.1">
    <property type="nucleotide sequence ID" value="NC_008340.1"/>
</dbReference>
<dbReference type="SMR" id="Q0A8Z1"/>
<dbReference type="KEGG" id="aeh:Mlg_1347"/>
<dbReference type="eggNOG" id="COG0571">
    <property type="taxonomic scope" value="Bacteria"/>
</dbReference>
<dbReference type="HOGENOM" id="CLU_000907_1_1_6"/>
<dbReference type="OrthoDB" id="9805026at2"/>
<dbReference type="Proteomes" id="UP000001962">
    <property type="component" value="Chromosome"/>
</dbReference>
<dbReference type="GO" id="GO:0005737">
    <property type="term" value="C:cytoplasm"/>
    <property type="evidence" value="ECO:0007669"/>
    <property type="project" value="UniProtKB-SubCell"/>
</dbReference>
<dbReference type="GO" id="GO:0003725">
    <property type="term" value="F:double-stranded RNA binding"/>
    <property type="evidence" value="ECO:0007669"/>
    <property type="project" value="TreeGrafter"/>
</dbReference>
<dbReference type="GO" id="GO:0046872">
    <property type="term" value="F:metal ion binding"/>
    <property type="evidence" value="ECO:0007669"/>
    <property type="project" value="UniProtKB-KW"/>
</dbReference>
<dbReference type="GO" id="GO:0004525">
    <property type="term" value="F:ribonuclease III activity"/>
    <property type="evidence" value="ECO:0007669"/>
    <property type="project" value="UniProtKB-UniRule"/>
</dbReference>
<dbReference type="GO" id="GO:0019843">
    <property type="term" value="F:rRNA binding"/>
    <property type="evidence" value="ECO:0007669"/>
    <property type="project" value="UniProtKB-KW"/>
</dbReference>
<dbReference type="GO" id="GO:0006397">
    <property type="term" value="P:mRNA processing"/>
    <property type="evidence" value="ECO:0007669"/>
    <property type="project" value="UniProtKB-UniRule"/>
</dbReference>
<dbReference type="GO" id="GO:0010468">
    <property type="term" value="P:regulation of gene expression"/>
    <property type="evidence" value="ECO:0007669"/>
    <property type="project" value="TreeGrafter"/>
</dbReference>
<dbReference type="GO" id="GO:0006364">
    <property type="term" value="P:rRNA processing"/>
    <property type="evidence" value="ECO:0007669"/>
    <property type="project" value="UniProtKB-UniRule"/>
</dbReference>
<dbReference type="GO" id="GO:0008033">
    <property type="term" value="P:tRNA processing"/>
    <property type="evidence" value="ECO:0007669"/>
    <property type="project" value="UniProtKB-KW"/>
</dbReference>
<dbReference type="CDD" id="cd10845">
    <property type="entry name" value="DSRM_RNAse_III_family"/>
    <property type="match status" value="1"/>
</dbReference>
<dbReference type="CDD" id="cd00593">
    <property type="entry name" value="RIBOc"/>
    <property type="match status" value="1"/>
</dbReference>
<dbReference type="FunFam" id="1.10.1520.10:FF:000001">
    <property type="entry name" value="Ribonuclease 3"/>
    <property type="match status" value="1"/>
</dbReference>
<dbReference type="FunFam" id="3.30.160.20:FF:000003">
    <property type="entry name" value="Ribonuclease 3"/>
    <property type="match status" value="1"/>
</dbReference>
<dbReference type="Gene3D" id="3.30.160.20">
    <property type="match status" value="1"/>
</dbReference>
<dbReference type="Gene3D" id="1.10.1520.10">
    <property type="entry name" value="Ribonuclease III domain"/>
    <property type="match status" value="1"/>
</dbReference>
<dbReference type="HAMAP" id="MF_00104">
    <property type="entry name" value="RNase_III"/>
    <property type="match status" value="1"/>
</dbReference>
<dbReference type="InterPro" id="IPR014720">
    <property type="entry name" value="dsRBD_dom"/>
</dbReference>
<dbReference type="InterPro" id="IPR011907">
    <property type="entry name" value="RNase_III"/>
</dbReference>
<dbReference type="InterPro" id="IPR000999">
    <property type="entry name" value="RNase_III_dom"/>
</dbReference>
<dbReference type="InterPro" id="IPR036389">
    <property type="entry name" value="RNase_III_sf"/>
</dbReference>
<dbReference type="NCBIfam" id="TIGR02191">
    <property type="entry name" value="RNaseIII"/>
    <property type="match status" value="1"/>
</dbReference>
<dbReference type="PANTHER" id="PTHR11207:SF0">
    <property type="entry name" value="RIBONUCLEASE 3"/>
    <property type="match status" value="1"/>
</dbReference>
<dbReference type="PANTHER" id="PTHR11207">
    <property type="entry name" value="RIBONUCLEASE III"/>
    <property type="match status" value="1"/>
</dbReference>
<dbReference type="Pfam" id="PF00035">
    <property type="entry name" value="dsrm"/>
    <property type="match status" value="1"/>
</dbReference>
<dbReference type="Pfam" id="PF14622">
    <property type="entry name" value="Ribonucleas_3_3"/>
    <property type="match status" value="1"/>
</dbReference>
<dbReference type="SMART" id="SM00358">
    <property type="entry name" value="DSRM"/>
    <property type="match status" value="1"/>
</dbReference>
<dbReference type="SMART" id="SM00535">
    <property type="entry name" value="RIBOc"/>
    <property type="match status" value="1"/>
</dbReference>
<dbReference type="SUPFAM" id="SSF54768">
    <property type="entry name" value="dsRNA-binding domain-like"/>
    <property type="match status" value="1"/>
</dbReference>
<dbReference type="SUPFAM" id="SSF69065">
    <property type="entry name" value="RNase III domain-like"/>
    <property type="match status" value="1"/>
</dbReference>
<dbReference type="PROSITE" id="PS50137">
    <property type="entry name" value="DS_RBD"/>
    <property type="match status" value="1"/>
</dbReference>
<dbReference type="PROSITE" id="PS00517">
    <property type="entry name" value="RNASE_3_1"/>
    <property type="match status" value="1"/>
</dbReference>
<dbReference type="PROSITE" id="PS50142">
    <property type="entry name" value="RNASE_3_2"/>
    <property type="match status" value="1"/>
</dbReference>
<protein>
    <recommendedName>
        <fullName evidence="1">Ribonuclease 3</fullName>
        <ecNumber evidence="1">3.1.26.3</ecNumber>
    </recommendedName>
    <alternativeName>
        <fullName evidence="1">Ribonuclease III</fullName>
        <shortName evidence="1">RNase III</shortName>
    </alternativeName>
</protein>